<reference key="1">
    <citation type="journal article" date="2000" name="Nature">
        <title>Sequence and analysis of chromosome 1 of the plant Arabidopsis thaliana.</title>
        <authorList>
            <person name="Theologis A."/>
            <person name="Ecker J.R."/>
            <person name="Palm C.J."/>
            <person name="Federspiel N.A."/>
            <person name="Kaul S."/>
            <person name="White O."/>
            <person name="Alonso J."/>
            <person name="Altafi H."/>
            <person name="Araujo R."/>
            <person name="Bowman C.L."/>
            <person name="Brooks S.Y."/>
            <person name="Buehler E."/>
            <person name="Chan A."/>
            <person name="Chao Q."/>
            <person name="Chen H."/>
            <person name="Cheuk R.F."/>
            <person name="Chin C.W."/>
            <person name="Chung M.K."/>
            <person name="Conn L."/>
            <person name="Conway A.B."/>
            <person name="Conway A.R."/>
            <person name="Creasy T.H."/>
            <person name="Dewar K."/>
            <person name="Dunn P."/>
            <person name="Etgu P."/>
            <person name="Feldblyum T.V."/>
            <person name="Feng J.-D."/>
            <person name="Fong B."/>
            <person name="Fujii C.Y."/>
            <person name="Gill J.E."/>
            <person name="Goldsmith A.D."/>
            <person name="Haas B."/>
            <person name="Hansen N.F."/>
            <person name="Hughes B."/>
            <person name="Huizar L."/>
            <person name="Hunter J.L."/>
            <person name="Jenkins J."/>
            <person name="Johnson-Hopson C."/>
            <person name="Khan S."/>
            <person name="Khaykin E."/>
            <person name="Kim C.J."/>
            <person name="Koo H.L."/>
            <person name="Kremenetskaia I."/>
            <person name="Kurtz D.B."/>
            <person name="Kwan A."/>
            <person name="Lam B."/>
            <person name="Langin-Hooper S."/>
            <person name="Lee A."/>
            <person name="Lee J.M."/>
            <person name="Lenz C.A."/>
            <person name="Li J.H."/>
            <person name="Li Y.-P."/>
            <person name="Lin X."/>
            <person name="Liu S.X."/>
            <person name="Liu Z.A."/>
            <person name="Luros J.S."/>
            <person name="Maiti R."/>
            <person name="Marziali A."/>
            <person name="Militscher J."/>
            <person name="Miranda M."/>
            <person name="Nguyen M."/>
            <person name="Nierman W.C."/>
            <person name="Osborne B.I."/>
            <person name="Pai G."/>
            <person name="Peterson J."/>
            <person name="Pham P.K."/>
            <person name="Rizzo M."/>
            <person name="Rooney T."/>
            <person name="Rowley D."/>
            <person name="Sakano H."/>
            <person name="Salzberg S.L."/>
            <person name="Schwartz J.R."/>
            <person name="Shinn P."/>
            <person name="Southwick A.M."/>
            <person name="Sun H."/>
            <person name="Tallon L.J."/>
            <person name="Tambunga G."/>
            <person name="Toriumi M.J."/>
            <person name="Town C.D."/>
            <person name="Utterback T."/>
            <person name="Van Aken S."/>
            <person name="Vaysberg M."/>
            <person name="Vysotskaia V.S."/>
            <person name="Walker M."/>
            <person name="Wu D."/>
            <person name="Yu G."/>
            <person name="Fraser C.M."/>
            <person name="Venter J.C."/>
            <person name="Davis R.W."/>
        </authorList>
    </citation>
    <scope>NUCLEOTIDE SEQUENCE [LARGE SCALE GENOMIC DNA]</scope>
    <source>
        <strain>cv. Columbia</strain>
    </source>
</reference>
<reference key="2">
    <citation type="journal article" date="2017" name="Plant J.">
        <title>Araport11: a complete reannotation of the Arabidopsis thaliana reference genome.</title>
        <authorList>
            <person name="Cheng C.Y."/>
            <person name="Krishnakumar V."/>
            <person name="Chan A.P."/>
            <person name="Thibaud-Nissen F."/>
            <person name="Schobel S."/>
            <person name="Town C.D."/>
        </authorList>
    </citation>
    <scope>GENOME REANNOTATION</scope>
    <source>
        <strain>cv. Columbia</strain>
    </source>
</reference>
<reference key="3">
    <citation type="journal article" date="2002" name="Plant Mol. Biol.">
        <title>Auxin-responsive gene expression: genes, promoters and regulatory factors.</title>
        <authorList>
            <person name="Hagen G."/>
            <person name="Guilfoyle T.J."/>
        </authorList>
    </citation>
    <scope>GENE FAMILY</scope>
    <scope>NOMENCLATURE</scope>
    <scope>FUNCTION</scope>
</reference>
<reference key="4">
    <citation type="journal article" date="2008" name="Trends Plant Sci.">
        <title>The plant B3 superfamily.</title>
        <authorList>
            <person name="Swaminathan K."/>
            <person name="Peterson K."/>
            <person name="Jack T."/>
        </authorList>
    </citation>
    <scope>GENE FAMILY</scope>
</reference>
<dbReference type="EMBL" id="AC022314">
    <property type="protein sequence ID" value="AAF79686.1"/>
    <property type="status" value="ALT_SEQ"/>
    <property type="molecule type" value="Genomic_DNA"/>
</dbReference>
<dbReference type="EMBL" id="CP002684">
    <property type="protein sequence ID" value="AEE32008.1"/>
    <property type="molecule type" value="Genomic_DNA"/>
</dbReference>
<dbReference type="PIR" id="E96503">
    <property type="entry name" value="E96503"/>
</dbReference>
<dbReference type="RefSeq" id="NP_175062.1">
    <property type="nucleotide sequence ID" value="NM_103522.1"/>
</dbReference>
<dbReference type="SMR" id="Q9LP07"/>
<dbReference type="STRING" id="3702.Q9LP07"/>
<dbReference type="PaxDb" id="3702-AT1G43950.1"/>
<dbReference type="EnsemblPlants" id="AT1G43950.1">
    <property type="protein sequence ID" value="AT1G43950.1"/>
    <property type="gene ID" value="AT1G43950"/>
</dbReference>
<dbReference type="GeneID" id="840994"/>
<dbReference type="Gramene" id="AT1G43950.1">
    <property type="protein sequence ID" value="AT1G43950.1"/>
    <property type="gene ID" value="AT1G43950"/>
</dbReference>
<dbReference type="KEGG" id="ath:AT1G43950"/>
<dbReference type="Araport" id="AT1G43950"/>
<dbReference type="TAIR" id="AT1G43950">
    <property type="gene designation" value="ARF23"/>
</dbReference>
<dbReference type="eggNOG" id="ENOG502QTME">
    <property type="taxonomic scope" value="Eukaryota"/>
</dbReference>
<dbReference type="HOGENOM" id="CLU_002626_3_1_1"/>
<dbReference type="InParanoid" id="Q9LP07"/>
<dbReference type="OMA" id="MACYTEN"/>
<dbReference type="PhylomeDB" id="Q9LP07"/>
<dbReference type="Proteomes" id="UP000006548">
    <property type="component" value="Chromosome 1"/>
</dbReference>
<dbReference type="ExpressionAtlas" id="Q9LP07">
    <property type="expression patterns" value="baseline and differential"/>
</dbReference>
<dbReference type="GO" id="GO:0005634">
    <property type="term" value="C:nucleus"/>
    <property type="evidence" value="ECO:0007669"/>
    <property type="project" value="UniProtKB-SubCell"/>
</dbReference>
<dbReference type="GO" id="GO:0003677">
    <property type="term" value="F:DNA binding"/>
    <property type="evidence" value="ECO:0007669"/>
    <property type="project" value="UniProtKB-KW"/>
</dbReference>
<dbReference type="GO" id="GO:0003700">
    <property type="term" value="F:DNA-binding transcription factor activity"/>
    <property type="evidence" value="ECO:0000250"/>
    <property type="project" value="TAIR"/>
</dbReference>
<dbReference type="GO" id="GO:0009734">
    <property type="term" value="P:auxin-activated signaling pathway"/>
    <property type="evidence" value="ECO:0007669"/>
    <property type="project" value="UniProtKB-KW"/>
</dbReference>
<dbReference type="GO" id="GO:0006355">
    <property type="term" value="P:regulation of DNA-templated transcription"/>
    <property type="evidence" value="ECO:0000304"/>
    <property type="project" value="TAIR"/>
</dbReference>
<dbReference type="CDD" id="cd10017">
    <property type="entry name" value="B3_DNA"/>
    <property type="match status" value="1"/>
</dbReference>
<dbReference type="Gene3D" id="2.40.330.10">
    <property type="entry name" value="DNA-binding pseudobarrel domain"/>
    <property type="match status" value="1"/>
</dbReference>
<dbReference type="InterPro" id="IPR044835">
    <property type="entry name" value="ARF_plant"/>
</dbReference>
<dbReference type="InterPro" id="IPR003340">
    <property type="entry name" value="B3_DNA-bd"/>
</dbReference>
<dbReference type="InterPro" id="IPR015300">
    <property type="entry name" value="DNA-bd_pseudobarrel_sf"/>
</dbReference>
<dbReference type="PANTHER" id="PTHR31384:SF164">
    <property type="entry name" value="AUXIN RESPONSE FACTOR 12-RELATED"/>
    <property type="match status" value="1"/>
</dbReference>
<dbReference type="PANTHER" id="PTHR31384">
    <property type="entry name" value="AUXIN RESPONSE FACTOR 4-RELATED"/>
    <property type="match status" value="1"/>
</dbReference>
<dbReference type="Pfam" id="PF02362">
    <property type="entry name" value="B3"/>
    <property type="match status" value="1"/>
</dbReference>
<dbReference type="SMART" id="SM01019">
    <property type="entry name" value="B3"/>
    <property type="match status" value="1"/>
</dbReference>
<dbReference type="SUPFAM" id="SSF101936">
    <property type="entry name" value="DNA-binding pseudobarrel domain"/>
    <property type="match status" value="1"/>
</dbReference>
<dbReference type="PROSITE" id="PS50863">
    <property type="entry name" value="B3"/>
    <property type="match status" value="1"/>
</dbReference>
<comment type="function">
    <text evidence="3">Auxin response factors (ARFs) are transcriptional factors that binds specifically to the DNA sequence 5'-TGTCTC-3' found in the auxin-responsive promoter elements (AuxREs). Could act as transcriptional activator or repressor. Formation of heterodimers with Aux/IAA proteins may alter their ability to modulate early auxin response genes expression.</text>
</comment>
<comment type="subunit">
    <text evidence="1">Homo and heterodimers.</text>
</comment>
<comment type="subcellular location">
    <subcellularLocation>
        <location>Nucleus</location>
    </subcellularLocation>
</comment>
<comment type="similarity">
    <text evidence="4">Belongs to the ARF family.</text>
</comment>
<comment type="caution">
    <text evidence="4">Could be the product of a pseudogene.</text>
</comment>
<comment type="sequence caution" evidence="4">
    <conflict type="erroneous gene model prediction">
        <sequence resource="EMBL-CDS" id="AAF79686"/>
    </conflict>
</comment>
<sequence length="222" mass="24821">MESGNVVNVQSELSGIIDGSKSYMYEQLWKLCAGPLCDIPKLGEKVYYFPQGHIELVEASTREELNELQPNCDLPSKLQCRVIAIHLKVENNSDETYVEITLMPDTTQVVIPTENENQFRPIVNSFTKVLTASDTSAQGEFSVPCKHAIECLPPLDMSQPIPAQELIAIDLHGNQWRFKHSYRVPRGDTTGWNAFTTSKKLVVGDVIVFARGETGELRVGIR</sequence>
<feature type="chain" id="PRO_0000111527" description="Putative auxin response factor 23">
    <location>
        <begin position="1"/>
        <end position="222"/>
    </location>
</feature>
<feature type="DNA-binding region" description="TF-B3" evidence="2">
    <location>
        <begin position="126"/>
        <end position="222"/>
    </location>
</feature>
<accession>Q9LP07</accession>
<keyword id="KW-0927">Auxin signaling pathway</keyword>
<keyword id="KW-0238">DNA-binding</keyword>
<keyword id="KW-0539">Nucleus</keyword>
<keyword id="KW-1185">Reference proteome</keyword>
<keyword id="KW-0804">Transcription</keyword>
<keyword id="KW-0805">Transcription regulation</keyword>
<protein>
    <recommendedName>
        <fullName>Putative auxin response factor 23</fullName>
    </recommendedName>
</protein>
<name>ARFW_ARATH</name>
<evidence type="ECO:0000250" key="1"/>
<evidence type="ECO:0000255" key="2">
    <source>
        <dbReference type="PROSITE-ProRule" id="PRU00326"/>
    </source>
</evidence>
<evidence type="ECO:0000269" key="3">
    <source>
    </source>
</evidence>
<evidence type="ECO:0000305" key="4"/>
<gene>
    <name type="primary">ARF23</name>
    <name type="ordered locus">At1g43950</name>
    <name type="ORF">F9C16.11</name>
</gene>
<organism>
    <name type="scientific">Arabidopsis thaliana</name>
    <name type="common">Mouse-ear cress</name>
    <dbReference type="NCBI Taxonomy" id="3702"/>
    <lineage>
        <taxon>Eukaryota</taxon>
        <taxon>Viridiplantae</taxon>
        <taxon>Streptophyta</taxon>
        <taxon>Embryophyta</taxon>
        <taxon>Tracheophyta</taxon>
        <taxon>Spermatophyta</taxon>
        <taxon>Magnoliopsida</taxon>
        <taxon>eudicotyledons</taxon>
        <taxon>Gunneridae</taxon>
        <taxon>Pentapetalae</taxon>
        <taxon>rosids</taxon>
        <taxon>malvids</taxon>
        <taxon>Brassicales</taxon>
        <taxon>Brassicaceae</taxon>
        <taxon>Camelineae</taxon>
        <taxon>Arabidopsis</taxon>
    </lineage>
</organism>
<proteinExistence type="uncertain"/>